<keyword id="KW-0025">Alternative splicing</keyword>
<keyword id="KW-1185">Reference proteome</keyword>
<evidence type="ECO:0000305" key="1"/>
<evidence type="ECO:0000312" key="2">
    <source>
        <dbReference type="WormBase" id="T18D3.7a"/>
    </source>
</evidence>
<evidence type="ECO:0000312" key="3">
    <source>
        <dbReference type="WormBase" id="T18D3.7b"/>
    </source>
</evidence>
<evidence type="ECO:0000312" key="4">
    <source>
        <dbReference type="WormBase" id="T18D3.7c"/>
    </source>
</evidence>
<feature type="chain" id="PRO_0000219378" description="Protein tsct-1">
    <location>
        <begin position="1"/>
        <end position="269"/>
    </location>
</feature>
<feature type="splice variant" id="VSP_061797" description="In isoform c." evidence="1">
    <location>
        <begin position="1"/>
        <end position="138"/>
    </location>
</feature>
<feature type="splice variant" id="VSP_061798" description="In isoform b." evidence="1">
    <location>
        <begin position="1"/>
        <end position="14"/>
    </location>
</feature>
<gene>
    <name evidence="2" type="primary">tsct-1</name>
    <name evidence="2" type="synonym">txt-21</name>
    <name evidence="2" type="ORF">T18D3.7</name>
</gene>
<comment type="alternative products">
    <event type="alternative splicing"/>
    <isoform>
        <id>Q22544-1</id>
        <name evidence="2">a</name>
        <sequence type="displayed"/>
    </isoform>
    <isoform>
        <id>Q22544-2</id>
        <name evidence="3">b</name>
        <sequence type="described" ref="VSP_061798"/>
    </isoform>
    <isoform>
        <id>Q22544-3</id>
        <name evidence="4">c</name>
        <sequence type="described" ref="VSP_061797"/>
    </isoform>
</comment>
<comment type="similarity">
    <text evidence="1">Belongs to the TSC-22/Dip/Bun family.</text>
</comment>
<sequence>MFIFAAAFQQNTIIMSTTSNEASVIEVVPPNANCDKPKKKFQVVPVPGEFTRGRWKVIDTRFGSAMGEFGNYPPEDEYKMIVTSKNNVITVRKKFPRPTTVTSAPILGAEEADSIRVLQKSQPRFEQVPVTNQIKILIMDPETAVVTAGNTGSTASEVGTDFALTNDMTSSPSSVALLSGDPTKMEDSAKLATATSNTVVAIDNKIVQAMDLVKTHLTFAVREEVETLRTTITDLEARLNALREENRLLRENVSPEVLAFITANKQLCE</sequence>
<dbReference type="EMBL" id="BX284606">
    <property type="protein sequence ID" value="CAA92196.2"/>
    <property type="molecule type" value="Genomic_DNA"/>
</dbReference>
<dbReference type="EMBL" id="BX284606">
    <property type="protein sequence ID" value="CCH63818.1"/>
    <property type="molecule type" value="Genomic_DNA"/>
</dbReference>
<dbReference type="EMBL" id="BX284606">
    <property type="protein sequence ID" value="CCH63819.1"/>
    <property type="molecule type" value="Genomic_DNA"/>
</dbReference>
<dbReference type="PIR" id="T24966">
    <property type="entry name" value="T24966"/>
</dbReference>
<dbReference type="RefSeq" id="NP_001257192.1">
    <molecule id="Q22544-1"/>
    <property type="nucleotide sequence ID" value="NM_001270263.3"/>
</dbReference>
<dbReference type="RefSeq" id="NP_001257193.1">
    <property type="nucleotide sequence ID" value="NM_001270264.1"/>
</dbReference>
<dbReference type="RefSeq" id="NP_001257194.1">
    <property type="nucleotide sequence ID" value="NM_001270265.1"/>
</dbReference>
<dbReference type="RefSeq" id="NP_001366745.1">
    <molecule id="Q22544-3"/>
    <property type="nucleotide sequence ID" value="NM_001381119.1"/>
</dbReference>
<dbReference type="RefSeq" id="NP_001368132.1">
    <molecule id="Q22544-2"/>
    <property type="nucleotide sequence ID" value="NM_001381118.1"/>
</dbReference>
<dbReference type="SMR" id="Q22544"/>
<dbReference type="BioGRID" id="53239">
    <property type="interactions" value="23"/>
</dbReference>
<dbReference type="DIP" id="DIP-27116N"/>
<dbReference type="FunCoup" id="Q22544">
    <property type="interactions" value="128"/>
</dbReference>
<dbReference type="IntAct" id="Q22544">
    <property type="interactions" value="18"/>
</dbReference>
<dbReference type="STRING" id="6239.T18D3.7a.1"/>
<dbReference type="PaxDb" id="6239-T18D3.7a.1"/>
<dbReference type="EnsemblMetazoa" id="T18D3.7a.1">
    <molecule id="Q22544-1"/>
    <property type="protein sequence ID" value="T18D3.7a.1"/>
    <property type="gene ID" value="WBGene00011824"/>
</dbReference>
<dbReference type="EnsemblMetazoa" id="T18D3.7b.1">
    <molecule id="Q22544-2"/>
    <property type="protein sequence ID" value="T18D3.7b.1"/>
    <property type="gene ID" value="WBGene00011824"/>
</dbReference>
<dbReference type="EnsemblMetazoa" id="T18D3.7c.1">
    <molecule id="Q22544-3"/>
    <property type="protein sequence ID" value="T18D3.7c.1"/>
    <property type="gene ID" value="WBGene00011824"/>
</dbReference>
<dbReference type="GeneID" id="188577"/>
<dbReference type="KEGG" id="cel:CELE_T18D3.7"/>
<dbReference type="UCSC" id="T18D3.7.2">
    <molecule id="Q22544-1"/>
    <property type="organism name" value="c. elegans"/>
</dbReference>
<dbReference type="AGR" id="WB:WBGene00011824"/>
<dbReference type="CTD" id="188577"/>
<dbReference type="WormBase" id="T18D3.7a">
    <molecule id="Q22544-1"/>
    <property type="protein sequence ID" value="CE47649"/>
    <property type="gene ID" value="WBGene00011824"/>
    <property type="gene designation" value="tsct-1"/>
</dbReference>
<dbReference type="WormBase" id="T18D3.7b">
    <molecule id="Q22544-2"/>
    <property type="protein sequence ID" value="CE47596"/>
    <property type="gene ID" value="WBGene00011824"/>
    <property type="gene designation" value="tsct-1"/>
</dbReference>
<dbReference type="WormBase" id="T18D3.7c">
    <molecule id="Q22544-3"/>
    <property type="protein sequence ID" value="CE43264"/>
    <property type="gene ID" value="WBGene00011824"/>
    <property type="gene designation" value="tsct-1"/>
</dbReference>
<dbReference type="eggNOG" id="KOG4797">
    <property type="taxonomic scope" value="Eukaryota"/>
</dbReference>
<dbReference type="GeneTree" id="ENSGT00940000168943"/>
<dbReference type="HOGENOM" id="CLU_1120961_0_0_1"/>
<dbReference type="InParanoid" id="Q22544"/>
<dbReference type="OMA" id="PPNANCD"/>
<dbReference type="OrthoDB" id="8961796at2759"/>
<dbReference type="PhylomeDB" id="Q22544"/>
<dbReference type="PRO" id="PR:Q22544"/>
<dbReference type="Proteomes" id="UP000001940">
    <property type="component" value="Chromosome X"/>
</dbReference>
<dbReference type="Bgee" id="WBGene00011824">
    <property type="expression patterns" value="Expressed in larva and 3 other cell types or tissues"/>
</dbReference>
<dbReference type="ExpressionAtlas" id="Q22544">
    <property type="expression patterns" value="baseline and differential"/>
</dbReference>
<dbReference type="GO" id="GO:0006357">
    <property type="term" value="P:regulation of transcription by RNA polymerase II"/>
    <property type="evidence" value="ECO:0007669"/>
    <property type="project" value="InterPro"/>
</dbReference>
<dbReference type="CDD" id="cd21936">
    <property type="entry name" value="ZIP_TSC22D"/>
    <property type="match status" value="1"/>
</dbReference>
<dbReference type="Gene3D" id="1.20.5.490">
    <property type="entry name" value="Single helix bin"/>
    <property type="match status" value="1"/>
</dbReference>
<dbReference type="InterPro" id="IPR000580">
    <property type="entry name" value="TSC22/Bun"/>
</dbReference>
<dbReference type="InterPro" id="IPR047862">
    <property type="entry name" value="TSC22/BUN_CS"/>
</dbReference>
<dbReference type="PANTHER" id="PTHR12348:SF26">
    <property type="entry name" value="PROTEIN TSCT-1"/>
    <property type="match status" value="1"/>
</dbReference>
<dbReference type="PANTHER" id="PTHR12348">
    <property type="entry name" value="TSC22"/>
    <property type="match status" value="1"/>
</dbReference>
<dbReference type="Pfam" id="PF01166">
    <property type="entry name" value="TSC22"/>
    <property type="match status" value="1"/>
</dbReference>
<dbReference type="SUPFAM" id="SSF58026">
    <property type="entry name" value="Delta-sleep-inducing peptide immunoreactive peptide"/>
    <property type="match status" value="1"/>
</dbReference>
<dbReference type="PROSITE" id="PS01289">
    <property type="entry name" value="TSC22"/>
    <property type="match status" value="1"/>
</dbReference>
<name>TSCT1_CAEEL</name>
<proteinExistence type="inferred from homology"/>
<organism>
    <name type="scientific">Caenorhabditis elegans</name>
    <dbReference type="NCBI Taxonomy" id="6239"/>
    <lineage>
        <taxon>Eukaryota</taxon>
        <taxon>Metazoa</taxon>
        <taxon>Ecdysozoa</taxon>
        <taxon>Nematoda</taxon>
        <taxon>Chromadorea</taxon>
        <taxon>Rhabditida</taxon>
        <taxon>Rhabditina</taxon>
        <taxon>Rhabditomorpha</taxon>
        <taxon>Rhabditoidea</taxon>
        <taxon>Rhabditidae</taxon>
        <taxon>Peloderinae</taxon>
        <taxon>Caenorhabditis</taxon>
    </lineage>
</organism>
<protein>
    <recommendedName>
        <fullName evidence="1">Protein tsct-1</fullName>
    </recommendedName>
</protein>
<accession>Q22544</accession>
<accession>I2HAB1</accession>
<accession>I2HAB2</accession>
<reference key="1">
    <citation type="journal article" date="1998" name="Science">
        <title>Genome sequence of the nematode C. elegans: a platform for investigating biology.</title>
        <authorList>
            <consortium name="The C. elegans sequencing consortium"/>
        </authorList>
    </citation>
    <scope>NUCLEOTIDE SEQUENCE [LARGE SCALE GENOMIC DNA]</scope>
    <source>
        <strain>Bristol N2</strain>
    </source>
</reference>